<feature type="chain" id="PRO_0000364462" description="Fructose-1,6-bisphosphatase class 1">
    <location>
        <begin position="1"/>
        <end position="349"/>
    </location>
</feature>
<feature type="binding site" evidence="1">
    <location>
        <position position="113"/>
    </location>
    <ligand>
        <name>Mg(2+)</name>
        <dbReference type="ChEBI" id="CHEBI:18420"/>
        <label>1</label>
    </ligand>
</feature>
<feature type="binding site" evidence="1">
    <location>
        <position position="135"/>
    </location>
    <ligand>
        <name>Mg(2+)</name>
        <dbReference type="ChEBI" id="CHEBI:18420"/>
        <label>1</label>
    </ligand>
</feature>
<feature type="binding site" evidence="1">
    <location>
        <position position="135"/>
    </location>
    <ligand>
        <name>Mg(2+)</name>
        <dbReference type="ChEBI" id="CHEBI:18420"/>
        <label>2</label>
    </ligand>
</feature>
<feature type="binding site" evidence="1">
    <location>
        <position position="137"/>
    </location>
    <ligand>
        <name>Mg(2+)</name>
        <dbReference type="ChEBI" id="CHEBI:18420"/>
        <label>1</label>
    </ligand>
</feature>
<feature type="binding site" evidence="1">
    <location>
        <begin position="138"/>
        <end position="141"/>
    </location>
    <ligand>
        <name>substrate</name>
    </ligand>
</feature>
<feature type="binding site" evidence="1">
    <location>
        <position position="138"/>
    </location>
    <ligand>
        <name>Mg(2+)</name>
        <dbReference type="ChEBI" id="CHEBI:18420"/>
        <label>2</label>
    </ligand>
</feature>
<feature type="binding site" evidence="1">
    <location>
        <position position="230"/>
    </location>
    <ligand>
        <name>substrate</name>
    </ligand>
</feature>
<feature type="binding site" evidence="1">
    <location>
        <position position="258"/>
    </location>
    <ligand>
        <name>substrate</name>
    </ligand>
</feature>
<feature type="binding site" evidence="1">
    <location>
        <position position="288"/>
    </location>
    <ligand>
        <name>substrate</name>
    </ligand>
</feature>
<feature type="binding site" evidence="1">
    <location>
        <position position="294"/>
    </location>
    <ligand>
        <name>Mg(2+)</name>
        <dbReference type="ChEBI" id="CHEBI:18420"/>
        <label>2</label>
    </ligand>
</feature>
<reference key="1">
    <citation type="journal article" date="2014" name="Stand. Genomic Sci.">
        <title>Complete genome sequence of Anabaena variabilis ATCC 29413.</title>
        <authorList>
            <person name="Thiel T."/>
            <person name="Pratte B.S."/>
            <person name="Zhong J."/>
            <person name="Goodwin L."/>
            <person name="Copeland A."/>
            <person name="Lucas S."/>
            <person name="Han C."/>
            <person name="Pitluck S."/>
            <person name="Land M.L."/>
            <person name="Kyrpides N.C."/>
            <person name="Woyke T."/>
        </authorList>
    </citation>
    <scope>NUCLEOTIDE SEQUENCE [LARGE SCALE GENOMIC DNA]</scope>
    <source>
        <strain>ATCC 29413 / PCC 7937</strain>
    </source>
</reference>
<comment type="catalytic activity">
    <reaction evidence="1">
        <text>beta-D-fructose 1,6-bisphosphate + H2O = beta-D-fructose 6-phosphate + phosphate</text>
        <dbReference type="Rhea" id="RHEA:11064"/>
        <dbReference type="ChEBI" id="CHEBI:15377"/>
        <dbReference type="ChEBI" id="CHEBI:32966"/>
        <dbReference type="ChEBI" id="CHEBI:43474"/>
        <dbReference type="ChEBI" id="CHEBI:57634"/>
        <dbReference type="EC" id="3.1.3.11"/>
    </reaction>
</comment>
<comment type="cofactor">
    <cofactor evidence="1">
        <name>Mg(2+)</name>
        <dbReference type="ChEBI" id="CHEBI:18420"/>
    </cofactor>
    <text evidence="1">Binds 2 magnesium ions per subunit.</text>
</comment>
<comment type="pathway">
    <text evidence="1">Carbohydrate biosynthesis; Calvin cycle.</text>
</comment>
<comment type="subunit">
    <text evidence="1">Homotetramer.</text>
</comment>
<comment type="subcellular location">
    <subcellularLocation>
        <location evidence="1">Cytoplasm</location>
    </subcellularLocation>
</comment>
<comment type="similarity">
    <text evidence="1">Belongs to the FBPase class 1 family.</text>
</comment>
<accession>Q3MCI4</accession>
<name>F16PA_TRIV2</name>
<keyword id="KW-0113">Calvin cycle</keyword>
<keyword id="KW-0119">Carbohydrate metabolism</keyword>
<keyword id="KW-0963">Cytoplasm</keyword>
<keyword id="KW-0378">Hydrolase</keyword>
<keyword id="KW-0460">Magnesium</keyword>
<keyword id="KW-0479">Metal-binding</keyword>
<dbReference type="EC" id="3.1.3.11" evidence="1"/>
<dbReference type="EMBL" id="CP000117">
    <property type="protein sequence ID" value="ABA21302.1"/>
    <property type="molecule type" value="Genomic_DNA"/>
</dbReference>
<dbReference type="SMR" id="Q3MCI4"/>
<dbReference type="STRING" id="240292.Ava_1680"/>
<dbReference type="KEGG" id="ava:Ava_1680"/>
<dbReference type="eggNOG" id="COG0158">
    <property type="taxonomic scope" value="Bacteria"/>
</dbReference>
<dbReference type="HOGENOM" id="CLU_039977_2_2_3"/>
<dbReference type="UniPathway" id="UPA00116"/>
<dbReference type="Proteomes" id="UP000002533">
    <property type="component" value="Chromosome"/>
</dbReference>
<dbReference type="GO" id="GO:0005829">
    <property type="term" value="C:cytosol"/>
    <property type="evidence" value="ECO:0007669"/>
    <property type="project" value="TreeGrafter"/>
</dbReference>
<dbReference type="GO" id="GO:0042132">
    <property type="term" value="F:fructose 1,6-bisphosphate 1-phosphatase activity"/>
    <property type="evidence" value="ECO:0007669"/>
    <property type="project" value="UniProtKB-UniRule"/>
</dbReference>
<dbReference type="GO" id="GO:0000287">
    <property type="term" value="F:magnesium ion binding"/>
    <property type="evidence" value="ECO:0007669"/>
    <property type="project" value="UniProtKB-UniRule"/>
</dbReference>
<dbReference type="GO" id="GO:0030388">
    <property type="term" value="P:fructose 1,6-bisphosphate metabolic process"/>
    <property type="evidence" value="ECO:0007669"/>
    <property type="project" value="TreeGrafter"/>
</dbReference>
<dbReference type="GO" id="GO:0006002">
    <property type="term" value="P:fructose 6-phosphate metabolic process"/>
    <property type="evidence" value="ECO:0007669"/>
    <property type="project" value="TreeGrafter"/>
</dbReference>
<dbReference type="GO" id="GO:0006000">
    <property type="term" value="P:fructose metabolic process"/>
    <property type="evidence" value="ECO:0007669"/>
    <property type="project" value="TreeGrafter"/>
</dbReference>
<dbReference type="GO" id="GO:0006094">
    <property type="term" value="P:gluconeogenesis"/>
    <property type="evidence" value="ECO:0007669"/>
    <property type="project" value="UniProtKB-UniRule"/>
</dbReference>
<dbReference type="GO" id="GO:0019253">
    <property type="term" value="P:reductive pentose-phosphate cycle"/>
    <property type="evidence" value="ECO:0007669"/>
    <property type="project" value="UniProtKB-UniRule"/>
</dbReference>
<dbReference type="GO" id="GO:0005986">
    <property type="term" value="P:sucrose biosynthetic process"/>
    <property type="evidence" value="ECO:0007669"/>
    <property type="project" value="TreeGrafter"/>
</dbReference>
<dbReference type="CDD" id="cd00354">
    <property type="entry name" value="FBPase"/>
    <property type="match status" value="1"/>
</dbReference>
<dbReference type="FunFam" id="3.30.540.10:FF:000002">
    <property type="entry name" value="Fructose-1,6-bisphosphatase class 1"/>
    <property type="match status" value="1"/>
</dbReference>
<dbReference type="Gene3D" id="3.40.190.80">
    <property type="match status" value="1"/>
</dbReference>
<dbReference type="Gene3D" id="3.30.540.10">
    <property type="entry name" value="Fructose-1,6-Bisphosphatase, subunit A, domain 1"/>
    <property type="match status" value="1"/>
</dbReference>
<dbReference type="HAMAP" id="MF_01855">
    <property type="entry name" value="FBPase_class1"/>
    <property type="match status" value="1"/>
</dbReference>
<dbReference type="InterPro" id="IPR044015">
    <property type="entry name" value="FBPase_C_dom"/>
</dbReference>
<dbReference type="InterPro" id="IPR000146">
    <property type="entry name" value="FBPase_class-1"/>
</dbReference>
<dbReference type="InterPro" id="IPR033391">
    <property type="entry name" value="FBPase_N"/>
</dbReference>
<dbReference type="InterPro" id="IPR028343">
    <property type="entry name" value="FBPtase"/>
</dbReference>
<dbReference type="InterPro" id="IPR020548">
    <property type="entry name" value="Fructose_bisphosphatase_AS"/>
</dbReference>
<dbReference type="NCBIfam" id="NF006778">
    <property type="entry name" value="PRK09293.1-1"/>
    <property type="match status" value="1"/>
</dbReference>
<dbReference type="PANTHER" id="PTHR11556">
    <property type="entry name" value="FRUCTOSE-1,6-BISPHOSPHATASE-RELATED"/>
    <property type="match status" value="1"/>
</dbReference>
<dbReference type="PANTHER" id="PTHR11556:SF35">
    <property type="entry name" value="SEDOHEPTULOSE-1,7-BISPHOSPHATASE, CHLOROPLASTIC"/>
    <property type="match status" value="1"/>
</dbReference>
<dbReference type="Pfam" id="PF00316">
    <property type="entry name" value="FBPase"/>
    <property type="match status" value="1"/>
</dbReference>
<dbReference type="Pfam" id="PF18913">
    <property type="entry name" value="FBPase_C"/>
    <property type="match status" value="1"/>
</dbReference>
<dbReference type="PIRSF" id="PIRSF500210">
    <property type="entry name" value="FBPtase"/>
    <property type="match status" value="1"/>
</dbReference>
<dbReference type="PIRSF" id="PIRSF000904">
    <property type="entry name" value="FBPtase_SBPase"/>
    <property type="match status" value="1"/>
</dbReference>
<dbReference type="PRINTS" id="PR00115">
    <property type="entry name" value="F16BPHPHTASE"/>
</dbReference>
<dbReference type="SUPFAM" id="SSF56655">
    <property type="entry name" value="Carbohydrate phosphatase"/>
    <property type="match status" value="1"/>
</dbReference>
<dbReference type="PROSITE" id="PS00124">
    <property type="entry name" value="FBPASE"/>
    <property type="match status" value="1"/>
</dbReference>
<organism>
    <name type="scientific">Trichormus variabilis (strain ATCC 29413 / PCC 7937)</name>
    <name type="common">Anabaena variabilis</name>
    <dbReference type="NCBI Taxonomy" id="240292"/>
    <lineage>
        <taxon>Bacteria</taxon>
        <taxon>Bacillati</taxon>
        <taxon>Cyanobacteriota</taxon>
        <taxon>Cyanophyceae</taxon>
        <taxon>Nostocales</taxon>
        <taxon>Nostocaceae</taxon>
        <taxon>Trichormus</taxon>
    </lineage>
</organism>
<evidence type="ECO:0000255" key="1">
    <source>
        <dbReference type="HAMAP-Rule" id="MF_01855"/>
    </source>
</evidence>
<protein>
    <recommendedName>
        <fullName evidence="1">Fructose-1,6-bisphosphatase class 1</fullName>
        <shortName evidence="1">FBPase class 1</shortName>
        <ecNumber evidence="1">3.1.3.11</ecNumber>
    </recommendedName>
    <alternativeName>
        <fullName evidence="1">D-fructose-1,6-bisphosphate 1-phosphohydrolase class 1</fullName>
    </alternativeName>
</protein>
<sequence length="349" mass="38518">MAKASESLDLSVNESTDKALDRDCTTLSRHVLQQLQSFSADAQDLSALMNRIALAGKLVARRLSRAGLMEGVLGFTGEVNVQGESVKKMDVYANDVFISVFKQSGLVCRLASEEMDEPYYIPENCPVGRYTLLYDPIDGSSNTDTNLSLGSIFSIRQQEGDDSDGQAKDLLTNGRKQIAAGYILYGPSTMLVYTMGKGVHSFTLDPSLGEFILSEENIRIPDHGAVYSVNEGNFWQWEESMREYIRYVHRTEGYTARYSGAMVSDIHRILVQGGVFLYPGTVQNPEGKLRLLYESAPLAFLIQQAGGRATTGLVDILDVVPKKLHQRTPLIIGSKEDVAKVESFIQNGH</sequence>
<gene>
    <name evidence="1" type="primary">fbp</name>
    <name type="ordered locus">Ava_1680</name>
</gene>
<proteinExistence type="inferred from homology"/>